<accession>A3DIL4</accession>
<reference key="1">
    <citation type="submission" date="2007-02" db="EMBL/GenBank/DDBJ databases">
        <title>Complete sequence of Clostridium thermocellum ATCC 27405.</title>
        <authorList>
            <consortium name="US DOE Joint Genome Institute"/>
            <person name="Copeland A."/>
            <person name="Lucas S."/>
            <person name="Lapidus A."/>
            <person name="Barry K."/>
            <person name="Detter J.C."/>
            <person name="Glavina del Rio T."/>
            <person name="Hammon N."/>
            <person name="Israni S."/>
            <person name="Dalin E."/>
            <person name="Tice H."/>
            <person name="Pitluck S."/>
            <person name="Chertkov O."/>
            <person name="Brettin T."/>
            <person name="Bruce D."/>
            <person name="Han C."/>
            <person name="Tapia R."/>
            <person name="Gilna P."/>
            <person name="Schmutz J."/>
            <person name="Larimer F."/>
            <person name="Land M."/>
            <person name="Hauser L."/>
            <person name="Kyrpides N."/>
            <person name="Mikhailova N."/>
            <person name="Wu J.H.D."/>
            <person name="Newcomb M."/>
            <person name="Richardson P."/>
        </authorList>
    </citation>
    <scope>NUCLEOTIDE SEQUENCE [LARGE SCALE GENOMIC DNA]</scope>
    <source>
        <strain>ATCC 27405 / DSM 1237 / JCM 9322 / NBRC 103400 / NCIMB 10682 / NRRL B-4536 / VPI 7372</strain>
    </source>
</reference>
<gene>
    <name evidence="1" type="primary">prfA</name>
    <name type="ordered locus">Cthe_2593</name>
</gene>
<name>RF1_ACET2</name>
<proteinExistence type="inferred from homology"/>
<evidence type="ECO:0000255" key="1">
    <source>
        <dbReference type="HAMAP-Rule" id="MF_00093"/>
    </source>
</evidence>
<evidence type="ECO:0000256" key="2">
    <source>
        <dbReference type="SAM" id="MobiDB-lite"/>
    </source>
</evidence>
<sequence length="360" mass="41024">MFEKFQAAENRYDEINHRLSDPAVIANQDEYKKLMKEHAELEVLVTKYNEYKKLTKEIADAKEMLNEKLDKEFREMVETELKEAQEKLEVLKKEMKILLLPKDPNDERNVIVEIRGGAGGDEAALFAGDLFRMYTRYAERNGWKTEILDSNPTEIGGFKEVVFSIEGNGAYSRLKFESGVHRVQRVPVTEANGRVHTSTVTVAVLPEAEEIDVEINPNDLRIDTYRASGAGGQHINKTDSAIRITHLPTGLVVCCQDQRSQHKNKEKAMKVLRSKLYEMAREQQHNEIAQERKSQVGTGDRSERIRTYNFPQGRVTDHRIGLTLYKIDDILDGDIDEIIDALITTDQASKLANGAEDDED</sequence>
<dbReference type="EMBL" id="CP000568">
    <property type="protein sequence ID" value="ABN53793.1"/>
    <property type="molecule type" value="Genomic_DNA"/>
</dbReference>
<dbReference type="RefSeq" id="WP_003512988.1">
    <property type="nucleotide sequence ID" value="NC_009012.1"/>
</dbReference>
<dbReference type="SMR" id="A3DIL4"/>
<dbReference type="STRING" id="203119.Cthe_2593"/>
<dbReference type="GeneID" id="35803315"/>
<dbReference type="KEGG" id="cth:Cthe_2593"/>
<dbReference type="eggNOG" id="COG0216">
    <property type="taxonomic scope" value="Bacteria"/>
</dbReference>
<dbReference type="HOGENOM" id="CLU_036856_0_1_9"/>
<dbReference type="OrthoDB" id="9806673at2"/>
<dbReference type="Proteomes" id="UP000002145">
    <property type="component" value="Chromosome"/>
</dbReference>
<dbReference type="GO" id="GO:0005737">
    <property type="term" value="C:cytoplasm"/>
    <property type="evidence" value="ECO:0007669"/>
    <property type="project" value="UniProtKB-SubCell"/>
</dbReference>
<dbReference type="GO" id="GO:0016149">
    <property type="term" value="F:translation release factor activity, codon specific"/>
    <property type="evidence" value="ECO:0007669"/>
    <property type="project" value="UniProtKB-UniRule"/>
</dbReference>
<dbReference type="FunFam" id="3.30.160.20:FF:000004">
    <property type="entry name" value="Peptide chain release factor 1"/>
    <property type="match status" value="1"/>
</dbReference>
<dbReference type="FunFam" id="3.30.70.1660:FF:000002">
    <property type="entry name" value="Peptide chain release factor 1"/>
    <property type="match status" value="1"/>
</dbReference>
<dbReference type="FunFam" id="3.30.70.1660:FF:000004">
    <property type="entry name" value="Peptide chain release factor 1"/>
    <property type="match status" value="1"/>
</dbReference>
<dbReference type="Gene3D" id="3.30.160.20">
    <property type="match status" value="1"/>
</dbReference>
<dbReference type="Gene3D" id="3.30.70.1660">
    <property type="match status" value="1"/>
</dbReference>
<dbReference type="Gene3D" id="6.10.140.1950">
    <property type="match status" value="1"/>
</dbReference>
<dbReference type="HAMAP" id="MF_00093">
    <property type="entry name" value="Rel_fac_1"/>
    <property type="match status" value="1"/>
</dbReference>
<dbReference type="InterPro" id="IPR005139">
    <property type="entry name" value="PCRF"/>
</dbReference>
<dbReference type="InterPro" id="IPR000352">
    <property type="entry name" value="Pep_chain_release_fac_I"/>
</dbReference>
<dbReference type="InterPro" id="IPR045853">
    <property type="entry name" value="Pep_chain_release_fac_I_sf"/>
</dbReference>
<dbReference type="InterPro" id="IPR050057">
    <property type="entry name" value="Prokaryotic/Mito_RF"/>
</dbReference>
<dbReference type="InterPro" id="IPR004373">
    <property type="entry name" value="RF-1"/>
</dbReference>
<dbReference type="NCBIfam" id="TIGR00019">
    <property type="entry name" value="prfA"/>
    <property type="match status" value="1"/>
</dbReference>
<dbReference type="NCBIfam" id="NF001859">
    <property type="entry name" value="PRK00591.1"/>
    <property type="match status" value="1"/>
</dbReference>
<dbReference type="PANTHER" id="PTHR43804">
    <property type="entry name" value="LD18447P"/>
    <property type="match status" value="1"/>
</dbReference>
<dbReference type="PANTHER" id="PTHR43804:SF7">
    <property type="entry name" value="LD18447P"/>
    <property type="match status" value="1"/>
</dbReference>
<dbReference type="Pfam" id="PF03462">
    <property type="entry name" value="PCRF"/>
    <property type="match status" value="1"/>
</dbReference>
<dbReference type="Pfam" id="PF00472">
    <property type="entry name" value="RF-1"/>
    <property type="match status" value="1"/>
</dbReference>
<dbReference type="SMART" id="SM00937">
    <property type="entry name" value="PCRF"/>
    <property type="match status" value="1"/>
</dbReference>
<dbReference type="SUPFAM" id="SSF75620">
    <property type="entry name" value="Release factor"/>
    <property type="match status" value="1"/>
</dbReference>
<dbReference type="PROSITE" id="PS00745">
    <property type="entry name" value="RF_PROK_I"/>
    <property type="match status" value="1"/>
</dbReference>
<protein>
    <recommendedName>
        <fullName evidence="1">Peptide chain release factor 1</fullName>
        <shortName evidence="1">RF-1</shortName>
    </recommendedName>
</protein>
<comment type="function">
    <text evidence="1">Peptide chain release factor 1 directs the termination of translation in response to the peptide chain termination codons UAG and UAA.</text>
</comment>
<comment type="subcellular location">
    <subcellularLocation>
        <location evidence="1">Cytoplasm</location>
    </subcellularLocation>
</comment>
<comment type="PTM">
    <text evidence="1">Methylated by PrmC. Methylation increases the termination efficiency of RF1.</text>
</comment>
<comment type="similarity">
    <text evidence="1">Belongs to the prokaryotic/mitochondrial release factor family.</text>
</comment>
<keyword id="KW-0963">Cytoplasm</keyword>
<keyword id="KW-0488">Methylation</keyword>
<keyword id="KW-0648">Protein biosynthesis</keyword>
<keyword id="KW-1185">Reference proteome</keyword>
<feature type="chain" id="PRO_1000004884" description="Peptide chain release factor 1">
    <location>
        <begin position="1"/>
        <end position="360"/>
    </location>
</feature>
<feature type="region of interest" description="Disordered" evidence="2">
    <location>
        <begin position="286"/>
        <end position="305"/>
    </location>
</feature>
<feature type="modified residue" description="N5-methylglutamine" evidence="1">
    <location>
        <position position="233"/>
    </location>
</feature>
<organism>
    <name type="scientific">Acetivibrio thermocellus (strain ATCC 27405 / DSM 1237 / JCM 9322 / NBRC 103400 / NCIMB 10682 / NRRL B-4536 / VPI 7372)</name>
    <name type="common">Clostridium thermocellum</name>
    <dbReference type="NCBI Taxonomy" id="203119"/>
    <lineage>
        <taxon>Bacteria</taxon>
        <taxon>Bacillati</taxon>
        <taxon>Bacillota</taxon>
        <taxon>Clostridia</taxon>
        <taxon>Eubacteriales</taxon>
        <taxon>Oscillospiraceae</taxon>
        <taxon>Acetivibrio</taxon>
    </lineage>
</organism>